<proteinExistence type="evidence at protein level"/>
<evidence type="ECO:0000269" key="1">
    <source>
    </source>
</evidence>
<evidence type="ECO:0000305" key="2"/>
<evidence type="ECO:0007829" key="3">
    <source>
        <dbReference type="PDB" id="1QOR"/>
    </source>
</evidence>
<gene>
    <name type="primary">qorA</name>
    <name type="synonym">hcz</name>
    <name type="synonym">qor</name>
    <name type="synonym">qor1</name>
    <name type="ordered locus">b4051</name>
    <name type="ordered locus">JW4011</name>
</gene>
<reference key="1">
    <citation type="submission" date="1992-09" db="EMBL/GenBank/DDBJ databases">
        <authorList>
            <person name="Dixon N.E."/>
            <person name="Lilley P.E."/>
        </authorList>
    </citation>
    <scope>NUCLEOTIDE SEQUENCE [GENOMIC DNA]</scope>
    <source>
        <strain>K12</strain>
    </source>
</reference>
<reference key="2">
    <citation type="journal article" date="1993" name="Nucleic Acids Res.">
        <title>Analysis of the Escherichia coli genome. IV. DNA sequence of the region from 89.2 to 92.8 minutes.</title>
        <authorList>
            <person name="Blattner F.R."/>
            <person name="Burland V.D."/>
            <person name="Plunkett G. III"/>
            <person name="Sofia H.J."/>
            <person name="Daniels D.L."/>
        </authorList>
    </citation>
    <scope>NUCLEOTIDE SEQUENCE [LARGE SCALE GENOMIC DNA]</scope>
    <source>
        <strain>K12 / MG1655 / ATCC 47076</strain>
    </source>
</reference>
<reference key="3">
    <citation type="journal article" date="1997" name="Science">
        <title>The complete genome sequence of Escherichia coli K-12.</title>
        <authorList>
            <person name="Blattner F.R."/>
            <person name="Plunkett G. III"/>
            <person name="Bloch C.A."/>
            <person name="Perna N.T."/>
            <person name="Burland V."/>
            <person name="Riley M."/>
            <person name="Collado-Vides J."/>
            <person name="Glasner J.D."/>
            <person name="Rode C.K."/>
            <person name="Mayhew G.F."/>
            <person name="Gregor J."/>
            <person name="Davis N.W."/>
            <person name="Kirkpatrick H.A."/>
            <person name="Goeden M.A."/>
            <person name="Rose D.J."/>
            <person name="Mau B."/>
            <person name="Shao Y."/>
        </authorList>
    </citation>
    <scope>NUCLEOTIDE SEQUENCE [LARGE SCALE GENOMIC DNA]</scope>
    <source>
        <strain>K12 / MG1655 / ATCC 47076</strain>
    </source>
</reference>
<reference key="4">
    <citation type="journal article" date="2006" name="Mol. Syst. Biol.">
        <title>Highly accurate genome sequences of Escherichia coli K-12 strains MG1655 and W3110.</title>
        <authorList>
            <person name="Hayashi K."/>
            <person name="Morooka N."/>
            <person name="Yamamoto Y."/>
            <person name="Fujita K."/>
            <person name="Isono K."/>
            <person name="Choi S."/>
            <person name="Ohtsubo E."/>
            <person name="Baba T."/>
            <person name="Wanner B.L."/>
            <person name="Mori H."/>
            <person name="Horiuchi T."/>
        </authorList>
    </citation>
    <scope>NUCLEOTIDE SEQUENCE [LARGE SCALE GENOMIC DNA]</scope>
    <source>
        <strain>K12 / W3110 / ATCC 27325 / DSM 5911</strain>
    </source>
</reference>
<reference key="5">
    <citation type="journal article" date="1995" name="J. Mol. Biol.">
        <title>Crystal structure of Escherichia coli QOR quinone oxidoreductase complexed with NADPH.</title>
        <authorList>
            <person name="Thorn J.M."/>
            <person name="Barton J.D."/>
            <person name="Dixon N.E."/>
            <person name="Ollis D.L."/>
            <person name="Edwards K.J."/>
        </authorList>
    </citation>
    <scope>X-RAY CRYSTALLOGRAPHY (2.2 ANGSTROMS) IN COMPLEX WITH NADP</scope>
    <scope>SUBUNIT</scope>
</reference>
<keyword id="KW-0002">3D-structure</keyword>
<keyword id="KW-0521">NADP</keyword>
<keyword id="KW-0560">Oxidoreductase</keyword>
<keyword id="KW-1185">Reference proteome</keyword>
<protein>
    <recommendedName>
        <fullName>Quinone oxidoreductase 1</fullName>
        <ecNumber>1.6.5.5</ecNumber>
    </recommendedName>
    <alternativeName>
        <fullName>NADPH:quinone reductase 1</fullName>
    </alternativeName>
    <alternativeName>
        <fullName>Zeta-crystallin homolog protein</fullName>
    </alternativeName>
</protein>
<organism>
    <name type="scientific">Escherichia coli (strain K12)</name>
    <dbReference type="NCBI Taxonomy" id="83333"/>
    <lineage>
        <taxon>Bacteria</taxon>
        <taxon>Pseudomonadati</taxon>
        <taxon>Pseudomonadota</taxon>
        <taxon>Gammaproteobacteria</taxon>
        <taxon>Enterobacterales</taxon>
        <taxon>Enterobacteriaceae</taxon>
        <taxon>Escherichia</taxon>
    </lineage>
</organism>
<accession>P28304</accession>
<accession>Q2M6Q3</accession>
<name>QOR1_ECOLI</name>
<comment type="catalytic activity">
    <reaction>
        <text>2 a quinone + NADPH + H(+) = 2 a 1,4-benzosemiquinone + NADP(+)</text>
        <dbReference type="Rhea" id="RHEA:14269"/>
        <dbReference type="ChEBI" id="CHEBI:15378"/>
        <dbReference type="ChEBI" id="CHEBI:57783"/>
        <dbReference type="ChEBI" id="CHEBI:58349"/>
        <dbReference type="ChEBI" id="CHEBI:132124"/>
        <dbReference type="ChEBI" id="CHEBI:134225"/>
        <dbReference type="EC" id="1.6.5.5"/>
    </reaction>
</comment>
<comment type="subunit">
    <text evidence="1">Homodimer.</text>
</comment>
<comment type="interaction">
    <interactant intactId="EBI-556687">
        <id>P28304</id>
    </interactant>
    <interactant intactId="EBI-542092">
        <id>P0A6Y8</id>
        <label>dnaK</label>
    </interactant>
    <organismsDiffer>false</organismsDiffer>
    <experiments>2</experiments>
</comment>
<comment type="similarity">
    <text evidence="2">Belongs to the zinc-containing alcohol dehydrogenase family. Quinone oxidoreductase subfamily.</text>
</comment>
<dbReference type="EC" id="1.6.5.5"/>
<dbReference type="EMBL" id="L02312">
    <property type="protein sequence ID" value="AAA23691.1"/>
    <property type="molecule type" value="Genomic_DNA"/>
</dbReference>
<dbReference type="EMBL" id="U00006">
    <property type="protein sequence ID" value="AAC43145.1"/>
    <property type="molecule type" value="Genomic_DNA"/>
</dbReference>
<dbReference type="EMBL" id="U00096">
    <property type="protein sequence ID" value="AAC77021.1"/>
    <property type="molecule type" value="Genomic_DNA"/>
</dbReference>
<dbReference type="EMBL" id="AP009048">
    <property type="protein sequence ID" value="BAE78053.1"/>
    <property type="molecule type" value="Genomic_DNA"/>
</dbReference>
<dbReference type="PIR" id="S45529">
    <property type="entry name" value="S45529"/>
</dbReference>
<dbReference type="RefSeq" id="NP_418475.1">
    <property type="nucleotide sequence ID" value="NC_000913.3"/>
</dbReference>
<dbReference type="RefSeq" id="WP_000235508.1">
    <property type="nucleotide sequence ID" value="NZ_SSZK01000016.1"/>
</dbReference>
<dbReference type="PDB" id="1QOR">
    <property type="method" value="X-ray"/>
    <property type="resolution" value="2.20 A"/>
    <property type="chains" value="A/B=1-327"/>
</dbReference>
<dbReference type="PDBsum" id="1QOR"/>
<dbReference type="SMR" id="P28304"/>
<dbReference type="BioGRID" id="4260805">
    <property type="interactions" value="39"/>
</dbReference>
<dbReference type="BioGRID" id="852850">
    <property type="interactions" value="2"/>
</dbReference>
<dbReference type="DIP" id="DIP-10631N"/>
<dbReference type="FunCoup" id="P28304">
    <property type="interactions" value="793"/>
</dbReference>
<dbReference type="IntAct" id="P28304">
    <property type="interactions" value="5"/>
</dbReference>
<dbReference type="STRING" id="511145.b4051"/>
<dbReference type="jPOST" id="P28304"/>
<dbReference type="PaxDb" id="511145-b4051"/>
<dbReference type="EnsemblBacteria" id="AAC77021">
    <property type="protein sequence ID" value="AAC77021"/>
    <property type="gene ID" value="b4051"/>
</dbReference>
<dbReference type="GeneID" id="948556"/>
<dbReference type="KEGG" id="ecj:JW4011"/>
<dbReference type="KEGG" id="eco:b4051"/>
<dbReference type="KEGG" id="ecoc:C3026_21890"/>
<dbReference type="PATRIC" id="fig|511145.12.peg.4169"/>
<dbReference type="EchoBASE" id="EB1455"/>
<dbReference type="eggNOG" id="COG0604">
    <property type="taxonomic scope" value="Bacteria"/>
</dbReference>
<dbReference type="HOGENOM" id="CLU_026673_3_1_6"/>
<dbReference type="InParanoid" id="P28304"/>
<dbReference type="OMA" id="KGMTAHY"/>
<dbReference type="OrthoDB" id="9805883at2"/>
<dbReference type="PhylomeDB" id="P28304"/>
<dbReference type="BioCyc" id="EcoCyc:QOR-MONOMER"/>
<dbReference type="EvolutionaryTrace" id="P28304"/>
<dbReference type="PRO" id="PR:P28304"/>
<dbReference type="Proteomes" id="UP000000625">
    <property type="component" value="Chromosome"/>
</dbReference>
<dbReference type="GO" id="GO:0005829">
    <property type="term" value="C:cytosol"/>
    <property type="evidence" value="ECO:0000314"/>
    <property type="project" value="EcoCyc"/>
</dbReference>
<dbReference type="GO" id="GO:0035925">
    <property type="term" value="F:mRNA 3'-UTR AU-rich region binding"/>
    <property type="evidence" value="ECO:0000318"/>
    <property type="project" value="GO_Central"/>
</dbReference>
<dbReference type="GO" id="GO:0070402">
    <property type="term" value="F:NADPH binding"/>
    <property type="evidence" value="ECO:0000318"/>
    <property type="project" value="GO_Central"/>
</dbReference>
<dbReference type="GO" id="GO:0003960">
    <property type="term" value="F:NADPH:quinone reductase activity"/>
    <property type="evidence" value="ECO:0000318"/>
    <property type="project" value="GO_Central"/>
</dbReference>
<dbReference type="GO" id="GO:0042803">
    <property type="term" value="F:protein homodimerization activity"/>
    <property type="evidence" value="ECO:0000314"/>
    <property type="project" value="EcoCyc"/>
</dbReference>
<dbReference type="GO" id="GO:0008270">
    <property type="term" value="F:zinc ion binding"/>
    <property type="evidence" value="ECO:0007669"/>
    <property type="project" value="InterPro"/>
</dbReference>
<dbReference type="CDD" id="cd05286">
    <property type="entry name" value="QOR2"/>
    <property type="match status" value="1"/>
</dbReference>
<dbReference type="FunFam" id="3.40.50.720:FF:000053">
    <property type="entry name" value="Quinone oxidoreductase 1"/>
    <property type="match status" value="1"/>
</dbReference>
<dbReference type="Gene3D" id="3.90.180.10">
    <property type="entry name" value="Medium-chain alcohol dehydrogenases, catalytic domain"/>
    <property type="match status" value="1"/>
</dbReference>
<dbReference type="Gene3D" id="3.40.50.720">
    <property type="entry name" value="NAD(P)-binding Rossmann-like Domain"/>
    <property type="match status" value="1"/>
</dbReference>
<dbReference type="InterPro" id="IPR013149">
    <property type="entry name" value="ADH-like_C"/>
</dbReference>
<dbReference type="InterPro" id="IPR013154">
    <property type="entry name" value="ADH-like_N"/>
</dbReference>
<dbReference type="InterPro" id="IPR011032">
    <property type="entry name" value="GroES-like_sf"/>
</dbReference>
<dbReference type="InterPro" id="IPR036291">
    <property type="entry name" value="NAD(P)-bd_dom_sf"/>
</dbReference>
<dbReference type="InterPro" id="IPR020843">
    <property type="entry name" value="PKS_ER"/>
</dbReference>
<dbReference type="InterPro" id="IPR047618">
    <property type="entry name" value="QOR-like"/>
</dbReference>
<dbReference type="InterPro" id="IPR002364">
    <property type="entry name" value="Quin_OxRdtase/zeta-crystal_CS"/>
</dbReference>
<dbReference type="NCBIfam" id="NF008024">
    <property type="entry name" value="PRK10754.1"/>
    <property type="match status" value="1"/>
</dbReference>
<dbReference type="PANTHER" id="PTHR48106">
    <property type="entry name" value="QUINONE OXIDOREDUCTASE PIG3-RELATED"/>
    <property type="match status" value="1"/>
</dbReference>
<dbReference type="PANTHER" id="PTHR48106:SF13">
    <property type="entry name" value="QUINONE OXIDOREDUCTASE-RELATED"/>
    <property type="match status" value="1"/>
</dbReference>
<dbReference type="Pfam" id="PF08240">
    <property type="entry name" value="ADH_N"/>
    <property type="match status" value="1"/>
</dbReference>
<dbReference type="Pfam" id="PF00107">
    <property type="entry name" value="ADH_zinc_N"/>
    <property type="match status" value="1"/>
</dbReference>
<dbReference type="SMART" id="SM00829">
    <property type="entry name" value="PKS_ER"/>
    <property type="match status" value="1"/>
</dbReference>
<dbReference type="SUPFAM" id="SSF50129">
    <property type="entry name" value="GroES-like"/>
    <property type="match status" value="1"/>
</dbReference>
<dbReference type="SUPFAM" id="SSF51735">
    <property type="entry name" value="NAD(P)-binding Rossmann-fold domains"/>
    <property type="match status" value="1"/>
</dbReference>
<dbReference type="PROSITE" id="PS01162">
    <property type="entry name" value="QOR_ZETA_CRYSTAL"/>
    <property type="match status" value="1"/>
</dbReference>
<sequence length="327" mass="35172">MATRIEFHKHGGPEVLQAVEFTPADPAENEIQVENKAIGINFIDTYIRSGLYPPPSLPSGLGTEAAGIVSKVGSGVKHIKAGDRVVYAQSALGAYSSVHNIIADKAAILPAAISFEQAAASFLKGLTVYYLLRKTYEIKPDEQFLFHAAAGGVGLIACQWAKALGAKLIGTVGTAQKAQSALKAGAWQVINYREEDLVERLKEITGGKKVRVVYDSVGRDTWERSLDCLQRRGLMVSFGNSSGAVTGVNLGILNQKGSLYVTRPSLQGYITTREELTEASNELFSLIASGVIKVDVAEQQKYPLKDAQRAHEILESRATQGSSLLIP</sequence>
<feature type="chain" id="PRO_0000160901" description="Quinone oxidoreductase 1">
    <location>
        <begin position="1"/>
        <end position="327"/>
    </location>
</feature>
<feature type="binding site" evidence="1">
    <location>
        <begin position="42"/>
        <end position="46"/>
    </location>
    <ligand>
        <name>NADP(+)</name>
        <dbReference type="ChEBI" id="CHEBI:58349"/>
    </ligand>
</feature>
<feature type="binding site" evidence="1">
    <location>
        <position position="130"/>
    </location>
    <ligand>
        <name>NADP(+)</name>
        <dbReference type="ChEBI" id="CHEBI:58349"/>
    </ligand>
</feature>
<feature type="binding site" evidence="1">
    <location>
        <begin position="152"/>
        <end position="153"/>
    </location>
    <ligand>
        <name>NADP(+)</name>
        <dbReference type="ChEBI" id="CHEBI:58349"/>
    </ligand>
</feature>
<feature type="binding site" evidence="1">
    <location>
        <begin position="173"/>
        <end position="177"/>
    </location>
    <ligand>
        <name>NADP(+)</name>
        <dbReference type="ChEBI" id="CHEBI:58349"/>
    </ligand>
</feature>
<feature type="binding site" evidence="1">
    <location>
        <position position="192"/>
    </location>
    <ligand>
        <name>NADP(+)</name>
        <dbReference type="ChEBI" id="CHEBI:58349"/>
    </ligand>
</feature>
<feature type="binding site" evidence="1">
    <location>
        <position position="216"/>
    </location>
    <ligand>
        <name>NADP(+)</name>
        <dbReference type="ChEBI" id="CHEBI:58349"/>
    </ligand>
</feature>
<feature type="binding site" evidence="1">
    <location>
        <begin position="238"/>
        <end position="241"/>
    </location>
    <ligand>
        <name>NADP(+)</name>
        <dbReference type="ChEBI" id="CHEBI:58349"/>
    </ligand>
</feature>
<feature type="binding site" evidence="1">
    <location>
        <begin position="264"/>
        <end position="266"/>
    </location>
    <ligand>
        <name>NADP(+)</name>
        <dbReference type="ChEBI" id="CHEBI:58349"/>
    </ligand>
</feature>
<feature type="binding site" evidence="1">
    <location>
        <position position="317"/>
    </location>
    <ligand>
        <name>NADP(+)</name>
        <dbReference type="ChEBI" id="CHEBI:58349"/>
    </ligand>
</feature>
<feature type="strand" evidence="3">
    <location>
        <begin position="3"/>
        <end position="9"/>
    </location>
</feature>
<feature type="helix" evidence="3">
    <location>
        <begin position="13"/>
        <end position="15"/>
    </location>
</feature>
<feature type="strand" evidence="3">
    <location>
        <begin position="17"/>
        <end position="20"/>
    </location>
</feature>
<feature type="strand" evidence="3">
    <location>
        <begin position="30"/>
        <end position="39"/>
    </location>
</feature>
<feature type="helix" evidence="3">
    <location>
        <begin position="42"/>
        <end position="48"/>
    </location>
</feature>
<feature type="strand" evidence="3">
    <location>
        <begin position="55"/>
        <end position="59"/>
    </location>
</feature>
<feature type="strand" evidence="3">
    <location>
        <begin position="65"/>
        <end position="72"/>
    </location>
</feature>
<feature type="strand" evidence="3">
    <location>
        <begin position="84"/>
        <end position="88"/>
    </location>
</feature>
<feature type="strand" evidence="3">
    <location>
        <begin position="95"/>
        <end position="102"/>
    </location>
</feature>
<feature type="helix" evidence="3">
    <location>
        <begin position="103"/>
        <end position="105"/>
    </location>
</feature>
<feature type="strand" evidence="3">
    <location>
        <begin position="106"/>
        <end position="108"/>
    </location>
</feature>
<feature type="helix" evidence="3">
    <location>
        <begin position="115"/>
        <end position="133"/>
    </location>
</feature>
<feature type="strand" evidence="3">
    <location>
        <begin position="143"/>
        <end position="148"/>
    </location>
</feature>
<feature type="helix" evidence="3">
    <location>
        <begin position="152"/>
        <end position="164"/>
    </location>
</feature>
<feature type="strand" evidence="3">
    <location>
        <begin position="167"/>
        <end position="174"/>
    </location>
</feature>
<feature type="helix" evidence="3">
    <location>
        <begin position="175"/>
        <end position="184"/>
    </location>
</feature>
<feature type="strand" evidence="3">
    <location>
        <begin position="187"/>
        <end position="191"/>
    </location>
</feature>
<feature type="turn" evidence="3">
    <location>
        <begin position="192"/>
        <end position="194"/>
    </location>
</feature>
<feature type="helix" evidence="3">
    <location>
        <begin position="197"/>
        <end position="204"/>
    </location>
</feature>
<feature type="turn" evidence="3">
    <location>
        <begin position="205"/>
        <end position="207"/>
    </location>
</feature>
<feature type="strand" evidence="3">
    <location>
        <begin position="210"/>
        <end position="215"/>
    </location>
</feature>
<feature type="helix" evidence="3">
    <location>
        <begin position="219"/>
        <end position="221"/>
    </location>
</feature>
<feature type="helix" evidence="3">
    <location>
        <begin position="222"/>
        <end position="227"/>
    </location>
</feature>
<feature type="strand" evidence="3">
    <location>
        <begin position="229"/>
        <end position="237"/>
    </location>
</feature>
<feature type="helix" evidence="3">
    <location>
        <begin position="251"/>
        <end position="255"/>
    </location>
</feature>
<feature type="strand" evidence="3">
    <location>
        <begin position="260"/>
        <end position="262"/>
    </location>
</feature>
<feature type="helix" evidence="3">
    <location>
        <begin position="266"/>
        <end position="269"/>
    </location>
</feature>
<feature type="helix" evidence="3">
    <location>
        <begin position="273"/>
        <end position="288"/>
    </location>
</feature>
<feature type="helix" evidence="3">
    <location>
        <begin position="298"/>
        <end position="300"/>
    </location>
</feature>
<feature type="strand" evidence="3">
    <location>
        <begin position="301"/>
        <end position="303"/>
    </location>
</feature>
<feature type="helix" evidence="3">
    <location>
        <begin position="304"/>
        <end position="306"/>
    </location>
</feature>
<feature type="helix" evidence="3">
    <location>
        <begin position="307"/>
        <end position="315"/>
    </location>
</feature>
<feature type="strand" evidence="3">
    <location>
        <begin position="324"/>
        <end position="326"/>
    </location>
</feature>